<comment type="function">
    <text evidence="1">Catalyzes the formation of N(4)-acetylcytidine (ac(4)C) at the wobble position of elongator tRNA(Met), using acetate and ATP as substrates. First activates an acetate ion to form acetyladenylate (Ac-AMP) and then transfers the acetyl group to tRNA to form ac(4)C34.</text>
</comment>
<comment type="catalytic activity">
    <reaction evidence="1">
        <text>cytidine(34) in elongator tRNA(Met) + acetate + ATP = N(4)-acetylcytidine(34) in elongator tRNA(Met) + AMP + diphosphate</text>
        <dbReference type="Rhea" id="RHEA:58144"/>
        <dbReference type="Rhea" id="RHEA-COMP:10693"/>
        <dbReference type="Rhea" id="RHEA-COMP:10694"/>
        <dbReference type="ChEBI" id="CHEBI:30089"/>
        <dbReference type="ChEBI" id="CHEBI:30616"/>
        <dbReference type="ChEBI" id="CHEBI:33019"/>
        <dbReference type="ChEBI" id="CHEBI:74900"/>
        <dbReference type="ChEBI" id="CHEBI:82748"/>
        <dbReference type="ChEBI" id="CHEBI:456215"/>
    </reaction>
</comment>
<comment type="subcellular location">
    <subcellularLocation>
        <location evidence="1">Cytoplasm</location>
    </subcellularLocation>
</comment>
<comment type="similarity">
    <text evidence="1">Belongs to the TmcAL family.</text>
</comment>
<keyword id="KW-0067">ATP-binding</keyword>
<keyword id="KW-0963">Cytoplasm</keyword>
<keyword id="KW-0436">Ligase</keyword>
<keyword id="KW-0547">Nucleotide-binding</keyword>
<keyword id="KW-0694">RNA-binding</keyword>
<keyword id="KW-0819">tRNA processing</keyword>
<keyword id="KW-0820">tRNA-binding</keyword>
<gene>
    <name evidence="1" type="primary">tmcAL</name>
    <name type="ordered locus">SSU98_0368</name>
</gene>
<dbReference type="EC" id="6.3.4.-" evidence="1"/>
<dbReference type="EMBL" id="CP000408">
    <property type="protein sequence ID" value="ABP91526.1"/>
    <property type="molecule type" value="Genomic_DNA"/>
</dbReference>
<dbReference type="SMR" id="A4VZI7"/>
<dbReference type="KEGG" id="ssv:SSU98_0368"/>
<dbReference type="HOGENOM" id="CLU_038915_0_2_9"/>
<dbReference type="BioCyc" id="SSUI391296:GI2E-406-MONOMER"/>
<dbReference type="GO" id="GO:0005737">
    <property type="term" value="C:cytoplasm"/>
    <property type="evidence" value="ECO:0007669"/>
    <property type="project" value="UniProtKB-SubCell"/>
</dbReference>
<dbReference type="GO" id="GO:0005524">
    <property type="term" value="F:ATP binding"/>
    <property type="evidence" value="ECO:0007669"/>
    <property type="project" value="UniProtKB-KW"/>
</dbReference>
<dbReference type="GO" id="GO:0016879">
    <property type="term" value="F:ligase activity, forming carbon-nitrogen bonds"/>
    <property type="evidence" value="ECO:0007669"/>
    <property type="project" value="UniProtKB-UniRule"/>
</dbReference>
<dbReference type="GO" id="GO:0000049">
    <property type="term" value="F:tRNA binding"/>
    <property type="evidence" value="ECO:0007669"/>
    <property type="project" value="UniProtKB-KW"/>
</dbReference>
<dbReference type="GO" id="GO:0006400">
    <property type="term" value="P:tRNA modification"/>
    <property type="evidence" value="ECO:0007669"/>
    <property type="project" value="UniProtKB-UniRule"/>
</dbReference>
<dbReference type="Gene3D" id="3.40.50.620">
    <property type="entry name" value="HUPs"/>
    <property type="match status" value="1"/>
</dbReference>
<dbReference type="HAMAP" id="MF_01539">
    <property type="entry name" value="TmcAL"/>
    <property type="match status" value="1"/>
</dbReference>
<dbReference type="InterPro" id="IPR014729">
    <property type="entry name" value="Rossmann-like_a/b/a_fold"/>
</dbReference>
<dbReference type="InterPro" id="IPR008513">
    <property type="entry name" value="tRNA(Met)_cyd_acetate_ligase"/>
</dbReference>
<dbReference type="NCBIfam" id="NF010191">
    <property type="entry name" value="PRK13670.1"/>
    <property type="match status" value="1"/>
</dbReference>
<dbReference type="PANTHER" id="PTHR37825">
    <property type="entry name" value="TRNA(MET) CYTIDINE ACETATE LIGASE"/>
    <property type="match status" value="1"/>
</dbReference>
<dbReference type="PANTHER" id="PTHR37825:SF1">
    <property type="entry name" value="TRNA(MET) CYTIDINE ACETATE LIGASE"/>
    <property type="match status" value="1"/>
</dbReference>
<dbReference type="Pfam" id="PF05636">
    <property type="entry name" value="HIGH_NTase1"/>
    <property type="match status" value="1"/>
</dbReference>
<dbReference type="SUPFAM" id="SSF52374">
    <property type="entry name" value="Nucleotidylyl transferase"/>
    <property type="match status" value="1"/>
</dbReference>
<protein>
    <recommendedName>
        <fullName evidence="1">tRNA(Met) cytidine acetate ligase</fullName>
        <ecNumber evidence="1">6.3.4.-</ecNumber>
    </recommendedName>
</protein>
<accession>A4VZI7</accession>
<sequence>MSISGIIAEYNPFHTGHKYLLEQAEGLKIVVMSGNFMQRGEPAIVDKWTRAQMALEHGADLVVEMPFLVSVQSADHFAKGAISILHRLGVEKLVFGTEEMLDYQKIADIYVDKSEEMENFVKNLPDNFSYPQKTQAMWQEFAGLTFTGDTPNHILALAYAKGVAGTGIQLSPVQRQGAGFHSEEVETSYASAIAIRKGADQLDLVRDFLPSASLFEEATKVSWRNYFPLLRYQITTHPDLSQVFQVNEELASRIRSAIGSVATVEELVEAVTTKRYTKARVRRVLTYILINAVETPLPDAVHVLGFSARGQAYLKQVKERVGLVTRIGKEPWDSLTQQADLVYQLGADAMAEQTYGRVPVRVE</sequence>
<feature type="chain" id="PRO_0000300201" description="tRNA(Met) cytidine acetate ligase">
    <location>
        <begin position="1"/>
        <end position="363"/>
    </location>
</feature>
<feature type="binding site" evidence="1">
    <location>
        <begin position="7"/>
        <end position="20"/>
    </location>
    <ligand>
        <name>ATP</name>
        <dbReference type="ChEBI" id="CHEBI:30616"/>
    </ligand>
</feature>
<feature type="binding site" evidence="1">
    <location>
        <position position="96"/>
    </location>
    <ligand>
        <name>ATP</name>
        <dbReference type="ChEBI" id="CHEBI:30616"/>
    </ligand>
</feature>
<feature type="binding site" evidence="1">
    <location>
        <position position="152"/>
    </location>
    <ligand>
        <name>ATP</name>
        <dbReference type="ChEBI" id="CHEBI:30616"/>
    </ligand>
</feature>
<feature type="binding site" evidence="1">
    <location>
        <position position="175"/>
    </location>
    <ligand>
        <name>ATP</name>
        <dbReference type="ChEBI" id="CHEBI:30616"/>
    </ligand>
</feature>
<organism>
    <name type="scientific">Streptococcus suis (strain 98HAH33)</name>
    <dbReference type="NCBI Taxonomy" id="391296"/>
    <lineage>
        <taxon>Bacteria</taxon>
        <taxon>Bacillati</taxon>
        <taxon>Bacillota</taxon>
        <taxon>Bacilli</taxon>
        <taxon>Lactobacillales</taxon>
        <taxon>Streptococcaceae</taxon>
        <taxon>Streptococcus</taxon>
    </lineage>
</organism>
<evidence type="ECO:0000255" key="1">
    <source>
        <dbReference type="HAMAP-Rule" id="MF_01539"/>
    </source>
</evidence>
<name>TMCAL_STRS2</name>
<proteinExistence type="inferred from homology"/>
<reference key="1">
    <citation type="journal article" date="2007" name="PLoS ONE">
        <title>A glimpse of streptococcal toxic shock syndrome from comparative genomics of S. suis 2 Chinese isolates.</title>
        <authorList>
            <person name="Chen C."/>
            <person name="Tang J."/>
            <person name="Dong W."/>
            <person name="Wang C."/>
            <person name="Feng Y."/>
            <person name="Wang J."/>
            <person name="Zheng F."/>
            <person name="Pan X."/>
            <person name="Liu D."/>
            <person name="Li M."/>
            <person name="Song Y."/>
            <person name="Zhu X."/>
            <person name="Sun H."/>
            <person name="Feng T."/>
            <person name="Guo Z."/>
            <person name="Ju A."/>
            <person name="Ge J."/>
            <person name="Dong Y."/>
            <person name="Sun W."/>
            <person name="Jiang Y."/>
            <person name="Wang J."/>
            <person name="Yan J."/>
            <person name="Yang H."/>
            <person name="Wang X."/>
            <person name="Gao G.F."/>
            <person name="Yang R."/>
            <person name="Wang J."/>
            <person name="Yu J."/>
        </authorList>
    </citation>
    <scope>NUCLEOTIDE SEQUENCE [LARGE SCALE GENOMIC DNA]</scope>
    <source>
        <strain>98HAH33</strain>
    </source>
</reference>